<sequence>MAKKNAKKSKNPPATIARNKRANFDYKFEEKFEAGLSLMGWEVKSIRVGKVNLSESYVFLRDGEAYLFGCTITPLNTASTHVVCDPMRDRKLLLNRRELDKLQGLVERQGYSIVPISMYWRKNAWVKLEIGLGKGKKEHDKRDDTKEREWKIEKSRTMKHAAR</sequence>
<dbReference type="EMBL" id="CP000606">
    <property type="protein sequence ID" value="ABO23138.1"/>
    <property type="molecule type" value="Genomic_DNA"/>
</dbReference>
<dbReference type="RefSeq" id="WP_011865070.1">
    <property type="nucleotide sequence ID" value="NC_009092.1"/>
</dbReference>
<dbReference type="SMR" id="A3QCE0"/>
<dbReference type="STRING" id="323850.Shew_1268"/>
<dbReference type="KEGG" id="slo:Shew_1268"/>
<dbReference type="eggNOG" id="COG0691">
    <property type="taxonomic scope" value="Bacteria"/>
</dbReference>
<dbReference type="HOGENOM" id="CLU_108953_3_0_6"/>
<dbReference type="OrthoDB" id="9805462at2"/>
<dbReference type="Proteomes" id="UP000001558">
    <property type="component" value="Chromosome"/>
</dbReference>
<dbReference type="GO" id="GO:0005829">
    <property type="term" value="C:cytosol"/>
    <property type="evidence" value="ECO:0007669"/>
    <property type="project" value="TreeGrafter"/>
</dbReference>
<dbReference type="GO" id="GO:0003723">
    <property type="term" value="F:RNA binding"/>
    <property type="evidence" value="ECO:0007669"/>
    <property type="project" value="UniProtKB-UniRule"/>
</dbReference>
<dbReference type="GO" id="GO:0070929">
    <property type="term" value="P:trans-translation"/>
    <property type="evidence" value="ECO:0007669"/>
    <property type="project" value="UniProtKB-UniRule"/>
</dbReference>
<dbReference type="CDD" id="cd09294">
    <property type="entry name" value="SmpB"/>
    <property type="match status" value="1"/>
</dbReference>
<dbReference type="Gene3D" id="2.40.280.10">
    <property type="match status" value="1"/>
</dbReference>
<dbReference type="HAMAP" id="MF_00023">
    <property type="entry name" value="SmpB"/>
    <property type="match status" value="1"/>
</dbReference>
<dbReference type="InterPro" id="IPR023620">
    <property type="entry name" value="SmpB"/>
</dbReference>
<dbReference type="InterPro" id="IPR000037">
    <property type="entry name" value="SsrA-bd_prot"/>
</dbReference>
<dbReference type="InterPro" id="IPR020081">
    <property type="entry name" value="SsrA-bd_prot_CS"/>
</dbReference>
<dbReference type="NCBIfam" id="NF003843">
    <property type="entry name" value="PRK05422.1"/>
    <property type="match status" value="1"/>
</dbReference>
<dbReference type="NCBIfam" id="TIGR00086">
    <property type="entry name" value="smpB"/>
    <property type="match status" value="1"/>
</dbReference>
<dbReference type="PANTHER" id="PTHR30308:SF2">
    <property type="entry name" value="SSRA-BINDING PROTEIN"/>
    <property type="match status" value="1"/>
</dbReference>
<dbReference type="PANTHER" id="PTHR30308">
    <property type="entry name" value="TMRNA-BINDING COMPONENT OF TRANS-TRANSLATION TAGGING COMPLEX"/>
    <property type="match status" value="1"/>
</dbReference>
<dbReference type="Pfam" id="PF01668">
    <property type="entry name" value="SmpB"/>
    <property type="match status" value="1"/>
</dbReference>
<dbReference type="SUPFAM" id="SSF74982">
    <property type="entry name" value="Small protein B (SmpB)"/>
    <property type="match status" value="1"/>
</dbReference>
<dbReference type="PROSITE" id="PS01317">
    <property type="entry name" value="SSRP"/>
    <property type="match status" value="1"/>
</dbReference>
<feature type="chain" id="PRO_1000002140" description="SsrA-binding protein">
    <location>
        <begin position="1"/>
        <end position="163"/>
    </location>
</feature>
<feature type="region of interest" description="Disordered" evidence="2">
    <location>
        <begin position="135"/>
        <end position="163"/>
    </location>
</feature>
<feature type="compositionally biased region" description="Basic and acidic residues" evidence="2">
    <location>
        <begin position="135"/>
        <end position="156"/>
    </location>
</feature>
<organism>
    <name type="scientific">Shewanella loihica (strain ATCC BAA-1088 / PV-4)</name>
    <dbReference type="NCBI Taxonomy" id="323850"/>
    <lineage>
        <taxon>Bacteria</taxon>
        <taxon>Pseudomonadati</taxon>
        <taxon>Pseudomonadota</taxon>
        <taxon>Gammaproteobacteria</taxon>
        <taxon>Alteromonadales</taxon>
        <taxon>Shewanellaceae</taxon>
        <taxon>Shewanella</taxon>
    </lineage>
</organism>
<gene>
    <name evidence="1" type="primary">smpB</name>
    <name type="ordered locus">Shew_1268</name>
</gene>
<protein>
    <recommendedName>
        <fullName evidence="1">SsrA-binding protein</fullName>
    </recommendedName>
    <alternativeName>
        <fullName evidence="1">Small protein B</fullName>
    </alternativeName>
</protein>
<proteinExistence type="inferred from homology"/>
<comment type="function">
    <text evidence="1">Required for rescue of stalled ribosomes mediated by trans-translation. Binds to transfer-messenger RNA (tmRNA), required for stable association of tmRNA with ribosomes. tmRNA and SmpB together mimic tRNA shape, replacing the anticodon stem-loop with SmpB. tmRNA is encoded by the ssrA gene; the 2 termini fold to resemble tRNA(Ala) and it encodes a 'tag peptide', a short internal open reading frame. During trans-translation Ala-aminoacylated tmRNA acts like a tRNA, entering the A-site of stalled ribosomes, displacing the stalled mRNA. The ribosome then switches to translate the ORF on the tmRNA; the nascent peptide is terminated with the 'tag peptide' encoded by the tmRNA and targeted for degradation. The ribosome is freed to recommence translation, which seems to be the essential function of trans-translation.</text>
</comment>
<comment type="subcellular location">
    <subcellularLocation>
        <location evidence="1">Cytoplasm</location>
    </subcellularLocation>
    <text evidence="1">The tmRNA-SmpB complex associates with stalled 70S ribosomes.</text>
</comment>
<comment type="similarity">
    <text evidence="1">Belongs to the SmpB family.</text>
</comment>
<reference key="1">
    <citation type="submission" date="2007-03" db="EMBL/GenBank/DDBJ databases">
        <title>Complete sequence of Shewanella loihica PV-4.</title>
        <authorList>
            <consortium name="US DOE Joint Genome Institute"/>
            <person name="Copeland A."/>
            <person name="Lucas S."/>
            <person name="Lapidus A."/>
            <person name="Barry K."/>
            <person name="Detter J.C."/>
            <person name="Glavina del Rio T."/>
            <person name="Hammon N."/>
            <person name="Israni S."/>
            <person name="Dalin E."/>
            <person name="Tice H."/>
            <person name="Pitluck S."/>
            <person name="Chain P."/>
            <person name="Malfatti S."/>
            <person name="Shin M."/>
            <person name="Vergez L."/>
            <person name="Schmutz J."/>
            <person name="Larimer F."/>
            <person name="Land M."/>
            <person name="Hauser L."/>
            <person name="Kyrpides N."/>
            <person name="Mikhailova N."/>
            <person name="Romine M.F."/>
            <person name="Serres G."/>
            <person name="Fredrickson J."/>
            <person name="Tiedje J."/>
            <person name="Richardson P."/>
        </authorList>
    </citation>
    <scope>NUCLEOTIDE SEQUENCE [LARGE SCALE GENOMIC DNA]</scope>
    <source>
        <strain>ATCC BAA-1088 / PV-4</strain>
    </source>
</reference>
<accession>A3QCE0</accession>
<name>SSRP_SHELP</name>
<evidence type="ECO:0000255" key="1">
    <source>
        <dbReference type="HAMAP-Rule" id="MF_00023"/>
    </source>
</evidence>
<evidence type="ECO:0000256" key="2">
    <source>
        <dbReference type="SAM" id="MobiDB-lite"/>
    </source>
</evidence>
<keyword id="KW-0963">Cytoplasm</keyword>
<keyword id="KW-1185">Reference proteome</keyword>
<keyword id="KW-0694">RNA-binding</keyword>